<name>PROA_LIGS1</name>
<comment type="function">
    <text evidence="1">Catalyzes the NADPH-dependent reduction of L-glutamate 5-phosphate into L-glutamate 5-semialdehyde and phosphate. The product spontaneously undergoes cyclization to form 1-pyrroline-5-carboxylate.</text>
</comment>
<comment type="catalytic activity">
    <reaction evidence="1">
        <text>L-glutamate 5-semialdehyde + phosphate + NADP(+) = L-glutamyl 5-phosphate + NADPH + H(+)</text>
        <dbReference type="Rhea" id="RHEA:19541"/>
        <dbReference type="ChEBI" id="CHEBI:15378"/>
        <dbReference type="ChEBI" id="CHEBI:43474"/>
        <dbReference type="ChEBI" id="CHEBI:57783"/>
        <dbReference type="ChEBI" id="CHEBI:58066"/>
        <dbReference type="ChEBI" id="CHEBI:58274"/>
        <dbReference type="ChEBI" id="CHEBI:58349"/>
        <dbReference type="EC" id="1.2.1.41"/>
    </reaction>
</comment>
<comment type="pathway">
    <text evidence="1">Amino-acid biosynthesis; L-proline biosynthesis; L-glutamate 5-semialdehyde from L-glutamate: step 2/2.</text>
</comment>
<comment type="subcellular location">
    <subcellularLocation>
        <location evidence="1">Cytoplasm</location>
    </subcellularLocation>
</comment>
<comment type="similarity">
    <text evidence="1">Belongs to the gamma-glutamyl phosphate reductase family.</text>
</comment>
<proteinExistence type="inferred from homology"/>
<dbReference type="EC" id="1.2.1.41" evidence="1"/>
<dbReference type="EMBL" id="CP000233">
    <property type="protein sequence ID" value="ABE00413.1"/>
    <property type="molecule type" value="Genomic_DNA"/>
</dbReference>
<dbReference type="RefSeq" id="WP_003704295.1">
    <property type="nucleotide sequence ID" value="NC_007929.1"/>
</dbReference>
<dbReference type="RefSeq" id="YP_536496.1">
    <property type="nucleotide sequence ID" value="NC_007929.1"/>
</dbReference>
<dbReference type="SMR" id="Q1WRR6"/>
<dbReference type="STRING" id="362948.LSL_1611"/>
<dbReference type="KEGG" id="lsl:LSL_1611"/>
<dbReference type="PATRIC" id="fig|362948.14.peg.1706"/>
<dbReference type="HOGENOM" id="CLU_030231_0_0_9"/>
<dbReference type="OrthoDB" id="9809970at2"/>
<dbReference type="UniPathway" id="UPA00098">
    <property type="reaction ID" value="UER00360"/>
</dbReference>
<dbReference type="Proteomes" id="UP000006559">
    <property type="component" value="Chromosome"/>
</dbReference>
<dbReference type="GO" id="GO:0005737">
    <property type="term" value="C:cytoplasm"/>
    <property type="evidence" value="ECO:0007669"/>
    <property type="project" value="UniProtKB-SubCell"/>
</dbReference>
<dbReference type="GO" id="GO:0004350">
    <property type="term" value="F:glutamate-5-semialdehyde dehydrogenase activity"/>
    <property type="evidence" value="ECO:0007669"/>
    <property type="project" value="UniProtKB-UniRule"/>
</dbReference>
<dbReference type="GO" id="GO:0050661">
    <property type="term" value="F:NADP binding"/>
    <property type="evidence" value="ECO:0007669"/>
    <property type="project" value="InterPro"/>
</dbReference>
<dbReference type="GO" id="GO:0055129">
    <property type="term" value="P:L-proline biosynthetic process"/>
    <property type="evidence" value="ECO:0007669"/>
    <property type="project" value="UniProtKB-UniRule"/>
</dbReference>
<dbReference type="CDD" id="cd07079">
    <property type="entry name" value="ALDH_F18-19_ProA-GPR"/>
    <property type="match status" value="1"/>
</dbReference>
<dbReference type="FunFam" id="3.40.309.10:FF:000006">
    <property type="entry name" value="Gamma-glutamyl phosphate reductase"/>
    <property type="match status" value="1"/>
</dbReference>
<dbReference type="Gene3D" id="3.40.605.10">
    <property type="entry name" value="Aldehyde Dehydrogenase, Chain A, domain 1"/>
    <property type="match status" value="1"/>
</dbReference>
<dbReference type="Gene3D" id="3.40.309.10">
    <property type="entry name" value="Aldehyde Dehydrogenase, Chain A, domain 2"/>
    <property type="match status" value="1"/>
</dbReference>
<dbReference type="HAMAP" id="MF_00412">
    <property type="entry name" value="ProA"/>
    <property type="match status" value="1"/>
</dbReference>
<dbReference type="InterPro" id="IPR016161">
    <property type="entry name" value="Ald_DH/histidinol_DH"/>
</dbReference>
<dbReference type="InterPro" id="IPR016163">
    <property type="entry name" value="Ald_DH_C"/>
</dbReference>
<dbReference type="InterPro" id="IPR016162">
    <property type="entry name" value="Ald_DH_N"/>
</dbReference>
<dbReference type="InterPro" id="IPR015590">
    <property type="entry name" value="Aldehyde_DH_dom"/>
</dbReference>
<dbReference type="InterPro" id="IPR020593">
    <property type="entry name" value="G-glutamylP_reductase_CS"/>
</dbReference>
<dbReference type="InterPro" id="IPR012134">
    <property type="entry name" value="Glu-5-SA_DH"/>
</dbReference>
<dbReference type="InterPro" id="IPR000965">
    <property type="entry name" value="GPR_dom"/>
</dbReference>
<dbReference type="NCBIfam" id="NF001221">
    <property type="entry name" value="PRK00197.1"/>
    <property type="match status" value="1"/>
</dbReference>
<dbReference type="NCBIfam" id="TIGR00407">
    <property type="entry name" value="proA"/>
    <property type="match status" value="1"/>
</dbReference>
<dbReference type="PANTHER" id="PTHR11063:SF8">
    <property type="entry name" value="DELTA-1-PYRROLINE-5-CARBOXYLATE SYNTHASE"/>
    <property type="match status" value="1"/>
</dbReference>
<dbReference type="PANTHER" id="PTHR11063">
    <property type="entry name" value="GLUTAMATE SEMIALDEHYDE DEHYDROGENASE"/>
    <property type="match status" value="1"/>
</dbReference>
<dbReference type="Pfam" id="PF00171">
    <property type="entry name" value="Aldedh"/>
    <property type="match status" value="2"/>
</dbReference>
<dbReference type="PIRSF" id="PIRSF000151">
    <property type="entry name" value="GPR"/>
    <property type="match status" value="1"/>
</dbReference>
<dbReference type="SUPFAM" id="SSF53720">
    <property type="entry name" value="ALDH-like"/>
    <property type="match status" value="1"/>
</dbReference>
<dbReference type="PROSITE" id="PS01223">
    <property type="entry name" value="PROA"/>
    <property type="match status" value="1"/>
</dbReference>
<reference key="1">
    <citation type="journal article" date="2006" name="Proc. Natl. Acad. Sci. U.S.A.">
        <title>Multireplicon genome architecture of Lactobacillus salivarius.</title>
        <authorList>
            <person name="Claesson M.J."/>
            <person name="Li Y."/>
            <person name="Leahy S."/>
            <person name="Canchaya C."/>
            <person name="van Pijkeren J.P."/>
            <person name="Cerdeno-Tarraga A.M."/>
            <person name="Parkhill J."/>
            <person name="Flynn S."/>
            <person name="O'Sullivan G.C."/>
            <person name="Collins J.K."/>
            <person name="Higgins D."/>
            <person name="Shanahan F."/>
            <person name="Fitzgerald G.F."/>
            <person name="van Sinderen D."/>
            <person name="O'Toole P.W."/>
        </authorList>
    </citation>
    <scope>NUCLEOTIDE SEQUENCE [LARGE SCALE GENOMIC DNA]</scope>
    <source>
        <strain>UCC118</strain>
    </source>
</reference>
<evidence type="ECO:0000255" key="1">
    <source>
        <dbReference type="HAMAP-Rule" id="MF_00412"/>
    </source>
</evidence>
<keyword id="KW-0028">Amino-acid biosynthesis</keyword>
<keyword id="KW-0963">Cytoplasm</keyword>
<keyword id="KW-0521">NADP</keyword>
<keyword id="KW-0560">Oxidoreductase</keyword>
<keyword id="KW-0641">Proline biosynthesis</keyword>
<keyword id="KW-1185">Reference proteome</keyword>
<gene>
    <name evidence="1" type="primary">proA</name>
    <name type="ordered locus">LSL_1611</name>
</gene>
<protein>
    <recommendedName>
        <fullName evidence="1">Gamma-glutamyl phosphate reductase</fullName>
        <shortName evidence="1">GPR</shortName>
        <ecNumber evidence="1">1.2.1.41</ecNumber>
    </recommendedName>
    <alternativeName>
        <fullName evidence="1">Glutamate-5-semialdehyde dehydrogenase</fullName>
    </alternativeName>
    <alternativeName>
        <fullName evidence="1">Glutamyl-gamma-semialdehyde dehydrogenase</fullName>
        <shortName evidence="1">GSA dehydrogenase</shortName>
    </alternativeName>
</protein>
<sequence length="415" mass="45717">MTVDLNKMGQAAREASRQLALLGEQKKNQVLETVAQELLAKADEIIAANKVDLENATNMPEKFIDRLKIDNDRIAAMAEGVRQVAQLADPIGKIDAGWVNYAGLQIEKKRVPLGVVGMIFEARPNVTVDASALCFKSGNAVILRGGKEALQTNIKITKVIRQALEQEGINPDAVQVITETSHELANEFMQLTDYLDVLIPRGSARLIQTVLNTAKVPVIETGAGICHVYVDKFADKKMAVEITTNAKVQRPSVCNAIENLVIHQDVAQEYLPAIADELQKYNVELRGDEKVCEILGDKATLATAEDWDTEYNDYIIAIKIVSSIDEAIDFINEHNTKHSEAIITENYTRSQKFLDEIDAACVYVNASTRFTDGFEFGFGAEIGISTQKLHARGPMGLEALTSTKYVIRGNGQIRK</sequence>
<organism>
    <name type="scientific">Ligilactobacillus salivarius (strain UCC118)</name>
    <name type="common">Lactobacillus salivarius</name>
    <dbReference type="NCBI Taxonomy" id="362948"/>
    <lineage>
        <taxon>Bacteria</taxon>
        <taxon>Bacillati</taxon>
        <taxon>Bacillota</taxon>
        <taxon>Bacilli</taxon>
        <taxon>Lactobacillales</taxon>
        <taxon>Lactobacillaceae</taxon>
        <taxon>Ligilactobacillus</taxon>
    </lineage>
</organism>
<accession>Q1WRR6</accession>
<feature type="chain" id="PRO_0000252576" description="Gamma-glutamyl phosphate reductase">
    <location>
        <begin position="1"/>
        <end position="415"/>
    </location>
</feature>